<gene>
    <name evidence="6" type="primary">BSX</name>
</gene>
<comment type="function">
    <text evidence="1">DNA binding protein that function as transcriptional activator. May play a role in the determination and function of cell types in the brain.</text>
</comment>
<comment type="subcellular location">
    <subcellularLocation>
        <location evidence="2">Nucleus</location>
    </subcellularLocation>
</comment>
<comment type="similarity">
    <text evidence="3">Belongs to the distal-less homeobox family.</text>
</comment>
<comment type="online information" name="Protein Spotlight">
    <link uri="https://www.proteinspotlight.org/back_issues/085"/>
    <text>Of fidgets and food - Issue 85 of August 2007</text>
</comment>
<reference evidence="6" key="1">
    <citation type="submission" date="2003-12" db="EMBL/GenBank/DDBJ databases">
        <title>Identification of vertebrate homologs of the Drosophila brain-specific homeobox gene.</title>
        <authorList>
            <person name="Assimacopoulos S."/>
            <person name="Ragsdale C.W."/>
        </authorList>
    </citation>
    <scope>NUCLEOTIDE SEQUENCE [MRNA]</scope>
    <source>
        <tissue evidence="6">Forebrain</tissue>
    </source>
</reference>
<name>BSH_CHICK</name>
<protein>
    <recommendedName>
        <fullName>Brain-specific homeobox protein homolog</fullName>
    </recommendedName>
</protein>
<accession>Q6RFL5</accession>
<dbReference type="EMBL" id="AY500594">
    <property type="protein sequence ID" value="AAR89086.1"/>
    <property type="molecule type" value="mRNA"/>
</dbReference>
<dbReference type="RefSeq" id="NP_989843.1">
    <property type="nucleotide sequence ID" value="NM_204512.1"/>
</dbReference>
<dbReference type="RefSeq" id="XP_046759682.1">
    <property type="nucleotide sequence ID" value="XM_046903726.1"/>
</dbReference>
<dbReference type="SMR" id="Q6RFL5"/>
<dbReference type="FunCoup" id="Q6RFL5">
    <property type="interactions" value="142"/>
</dbReference>
<dbReference type="STRING" id="9031.ENSGALP00000010513"/>
<dbReference type="PaxDb" id="9031-ENSGALP00000010513"/>
<dbReference type="Ensembl" id="ENSGALT00010062501.1">
    <property type="protein sequence ID" value="ENSGALP00010038648.1"/>
    <property type="gene ID" value="ENSGALG00010025614.1"/>
</dbReference>
<dbReference type="GeneID" id="395183"/>
<dbReference type="KEGG" id="gga:395183"/>
<dbReference type="CTD" id="390259"/>
<dbReference type="VEuPathDB" id="HostDB:geneid_395183"/>
<dbReference type="eggNOG" id="KOG0491">
    <property type="taxonomic scope" value="Eukaryota"/>
</dbReference>
<dbReference type="GeneTree" id="ENSGT00940000161473"/>
<dbReference type="HOGENOM" id="CLU_104234_0_0_1"/>
<dbReference type="InParanoid" id="Q6RFL5"/>
<dbReference type="OMA" id="DLPGKHC"/>
<dbReference type="OrthoDB" id="6159439at2759"/>
<dbReference type="PhylomeDB" id="Q6RFL5"/>
<dbReference type="TreeFam" id="TF350735"/>
<dbReference type="PRO" id="PR:Q6RFL5"/>
<dbReference type="Proteomes" id="UP000000539">
    <property type="component" value="Chromosome 24"/>
</dbReference>
<dbReference type="Bgee" id="ENSGALG00000006515">
    <property type="expression patterns" value="Expressed in granulocyte"/>
</dbReference>
<dbReference type="GO" id="GO:0005634">
    <property type="term" value="C:nucleus"/>
    <property type="evidence" value="ECO:0007669"/>
    <property type="project" value="UniProtKB-SubCell"/>
</dbReference>
<dbReference type="GO" id="GO:0000981">
    <property type="term" value="F:DNA-binding transcription factor activity, RNA polymerase II-specific"/>
    <property type="evidence" value="ECO:0000318"/>
    <property type="project" value="GO_Central"/>
</dbReference>
<dbReference type="GO" id="GO:0000978">
    <property type="term" value="F:RNA polymerase II cis-regulatory region sequence-specific DNA binding"/>
    <property type="evidence" value="ECO:0000318"/>
    <property type="project" value="GO_Central"/>
</dbReference>
<dbReference type="GO" id="GO:0007420">
    <property type="term" value="P:brain development"/>
    <property type="evidence" value="ECO:0000250"/>
    <property type="project" value="UniProtKB"/>
</dbReference>
<dbReference type="GO" id="GO:0030154">
    <property type="term" value="P:cell differentiation"/>
    <property type="evidence" value="ECO:0000318"/>
    <property type="project" value="GO_Central"/>
</dbReference>
<dbReference type="GO" id="GO:0006357">
    <property type="term" value="P:regulation of transcription by RNA polymerase II"/>
    <property type="evidence" value="ECO:0000318"/>
    <property type="project" value="GO_Central"/>
</dbReference>
<dbReference type="GO" id="GO:0019827">
    <property type="term" value="P:stem cell population maintenance"/>
    <property type="evidence" value="ECO:0000318"/>
    <property type="project" value="GO_Central"/>
</dbReference>
<dbReference type="CDD" id="cd00086">
    <property type="entry name" value="homeodomain"/>
    <property type="match status" value="1"/>
</dbReference>
<dbReference type="FunFam" id="1.10.10.60:FF:000173">
    <property type="entry name" value="brain-specific homeobox protein homolog"/>
    <property type="match status" value="1"/>
</dbReference>
<dbReference type="Gene3D" id="1.10.10.60">
    <property type="entry name" value="Homeodomain-like"/>
    <property type="match status" value="1"/>
</dbReference>
<dbReference type="InterPro" id="IPR001356">
    <property type="entry name" value="HD"/>
</dbReference>
<dbReference type="InterPro" id="IPR020479">
    <property type="entry name" value="HD_metazoa"/>
</dbReference>
<dbReference type="InterPro" id="IPR017970">
    <property type="entry name" value="Homeobox_CS"/>
</dbReference>
<dbReference type="InterPro" id="IPR050848">
    <property type="entry name" value="Homeobox_TF"/>
</dbReference>
<dbReference type="InterPro" id="IPR009057">
    <property type="entry name" value="Homeodomain-like_sf"/>
</dbReference>
<dbReference type="PANTHER" id="PTHR24333:SF16">
    <property type="entry name" value="BRAIN-SPECIFIC HOMEOBOX"/>
    <property type="match status" value="1"/>
</dbReference>
<dbReference type="PANTHER" id="PTHR24333">
    <property type="entry name" value="HOMEO BOX HB9 LIKE A-RELATED"/>
    <property type="match status" value="1"/>
</dbReference>
<dbReference type="Pfam" id="PF00046">
    <property type="entry name" value="Homeodomain"/>
    <property type="match status" value="1"/>
</dbReference>
<dbReference type="PRINTS" id="PR00024">
    <property type="entry name" value="HOMEOBOX"/>
</dbReference>
<dbReference type="SMART" id="SM00389">
    <property type="entry name" value="HOX"/>
    <property type="match status" value="1"/>
</dbReference>
<dbReference type="SUPFAM" id="SSF46689">
    <property type="entry name" value="Homeodomain-like"/>
    <property type="match status" value="1"/>
</dbReference>
<dbReference type="PROSITE" id="PS00027">
    <property type="entry name" value="HOMEOBOX_1"/>
    <property type="match status" value="1"/>
</dbReference>
<dbReference type="PROSITE" id="PS50071">
    <property type="entry name" value="HOMEOBOX_2"/>
    <property type="match status" value="1"/>
</dbReference>
<keyword id="KW-0010">Activator</keyword>
<keyword id="KW-0238">DNA-binding</keyword>
<keyword id="KW-0371">Homeobox</keyword>
<keyword id="KW-0539">Nucleus</keyword>
<keyword id="KW-1185">Reference proteome</keyword>
<keyword id="KW-0804">Transcription</keyword>
<keyword id="KW-0805">Transcription regulation</keyword>
<evidence type="ECO:0000250" key="1"/>
<evidence type="ECO:0000250" key="2">
    <source>
        <dbReference type="UniProtKB" id="Q810B3"/>
    </source>
</evidence>
<evidence type="ECO:0000255" key="3"/>
<evidence type="ECO:0000255" key="4">
    <source>
        <dbReference type="PROSITE-ProRule" id="PRU00108"/>
    </source>
</evidence>
<evidence type="ECO:0000256" key="5">
    <source>
        <dbReference type="SAM" id="MobiDB-lite"/>
    </source>
</evidence>
<evidence type="ECO:0000312" key="6">
    <source>
        <dbReference type="EMBL" id="AAR89086.1"/>
    </source>
</evidence>
<sequence length="233" mass="26452">MNLNFTSPVHPVPAPRPTSFFIEDILLHKPKPLREVPPEHFAGSLASRVPLLDYGYPLMPAPALLAPHPHPALHKPEHHHHHPYFLTTSGVPVPALFPHHAHAELPGKHCRRRKARTVFSDSQLSGLEKRFEIQRYLSTPERVELATALSLSETQVKTWFQNRRMKHKKQLRKSQDDPIHEENREQSSPEPELPEPAAAEPRKGPPGPFLLQDPEDEVDILEEGDILAAPHRL</sequence>
<organism>
    <name type="scientific">Gallus gallus</name>
    <name type="common">Chicken</name>
    <dbReference type="NCBI Taxonomy" id="9031"/>
    <lineage>
        <taxon>Eukaryota</taxon>
        <taxon>Metazoa</taxon>
        <taxon>Chordata</taxon>
        <taxon>Craniata</taxon>
        <taxon>Vertebrata</taxon>
        <taxon>Euteleostomi</taxon>
        <taxon>Archelosauria</taxon>
        <taxon>Archosauria</taxon>
        <taxon>Dinosauria</taxon>
        <taxon>Saurischia</taxon>
        <taxon>Theropoda</taxon>
        <taxon>Coelurosauria</taxon>
        <taxon>Aves</taxon>
        <taxon>Neognathae</taxon>
        <taxon>Galloanserae</taxon>
        <taxon>Galliformes</taxon>
        <taxon>Phasianidae</taxon>
        <taxon>Phasianinae</taxon>
        <taxon>Gallus</taxon>
    </lineage>
</organism>
<feature type="chain" id="PRO_0000048843" description="Brain-specific homeobox protein homolog">
    <location>
        <begin position="1"/>
        <end position="233"/>
    </location>
</feature>
<feature type="DNA-binding region" description="Homeobox" evidence="4">
    <location>
        <begin position="110"/>
        <end position="170"/>
    </location>
</feature>
<feature type="region of interest" description="Disordered" evidence="5">
    <location>
        <begin position="164"/>
        <end position="218"/>
    </location>
</feature>
<feature type="compositionally biased region" description="Basic and acidic residues" evidence="5">
    <location>
        <begin position="173"/>
        <end position="187"/>
    </location>
</feature>
<proteinExistence type="evidence at transcript level"/>